<accession>Q1CI58</accession>
<accession>C4GTV5</accession>
<sequence>MSDNSQKKVIVGMSGGVDSSVSAYLLQQQGYQVAGLFMKNWEEDDDEEYCSAATDLADAQAVCDKLGMELHTVNFAAEYWDNVFELFLAEYKAGRTPNPDILCNKEIKFKAFLEFAAEDLGADYIATGHYVRRQDVDGKSRLLRGLDGNKDQSYFLYTLSHEQIAQSLFPVGELEKPEVRRIAEQLDLVTAKKKDSTGICFIGERKFRDFLGRYLPAQPGPIMTVDGQLVGKHQGLMYHTLGQRKGLGIGGTKEGGDDPWYVVDKDLDSNTLLVAQGHEHPRLMSVGLVAQQLHWVDRQPVTAPFRCVVKTRYRQQDIPCTVTPLDDERVDVRFDDPVAAVTPGQSAVFYQGEICLGGGIIEQRYPLTNPA</sequence>
<proteinExistence type="inferred from homology"/>
<gene>
    <name evidence="1" type="primary">mnmA</name>
    <name type="ordered locus">YPN_1993</name>
    <name type="ORF">YP516_2219</name>
</gene>
<comment type="function">
    <text evidence="1">Catalyzes the 2-thiolation of uridine at the wobble position (U34) of tRNA(Lys), tRNA(Glu) and tRNA(Gln), leading to the formation of s(2)U34, the first step of tRNA-mnm(5)s(2)U34 synthesis. Sulfur is provided by IscS, via a sulfur-relay system. Binds ATP and its substrate tRNAs.</text>
</comment>
<comment type="catalytic activity">
    <reaction evidence="1">
        <text>S-sulfanyl-L-cysteinyl-[protein] + uridine(34) in tRNA + AH2 + ATP = 2-thiouridine(34) in tRNA + L-cysteinyl-[protein] + A + AMP + diphosphate + H(+)</text>
        <dbReference type="Rhea" id="RHEA:47032"/>
        <dbReference type="Rhea" id="RHEA-COMP:10131"/>
        <dbReference type="Rhea" id="RHEA-COMP:11726"/>
        <dbReference type="Rhea" id="RHEA-COMP:11727"/>
        <dbReference type="Rhea" id="RHEA-COMP:11728"/>
        <dbReference type="ChEBI" id="CHEBI:13193"/>
        <dbReference type="ChEBI" id="CHEBI:15378"/>
        <dbReference type="ChEBI" id="CHEBI:17499"/>
        <dbReference type="ChEBI" id="CHEBI:29950"/>
        <dbReference type="ChEBI" id="CHEBI:30616"/>
        <dbReference type="ChEBI" id="CHEBI:33019"/>
        <dbReference type="ChEBI" id="CHEBI:61963"/>
        <dbReference type="ChEBI" id="CHEBI:65315"/>
        <dbReference type="ChEBI" id="CHEBI:87170"/>
        <dbReference type="ChEBI" id="CHEBI:456215"/>
        <dbReference type="EC" id="2.8.1.13"/>
    </reaction>
</comment>
<comment type="subunit">
    <text evidence="1">Interacts with TusE.</text>
</comment>
<comment type="subcellular location">
    <subcellularLocation>
        <location evidence="1">Cytoplasm</location>
    </subcellularLocation>
</comment>
<comment type="similarity">
    <text evidence="1">Belongs to the MnmA/TRMU family.</text>
</comment>
<organism>
    <name type="scientific">Yersinia pestis bv. Antiqua (strain Nepal516)</name>
    <dbReference type="NCBI Taxonomy" id="377628"/>
    <lineage>
        <taxon>Bacteria</taxon>
        <taxon>Pseudomonadati</taxon>
        <taxon>Pseudomonadota</taxon>
        <taxon>Gammaproteobacteria</taxon>
        <taxon>Enterobacterales</taxon>
        <taxon>Yersiniaceae</taxon>
        <taxon>Yersinia</taxon>
    </lineage>
</organism>
<reference key="1">
    <citation type="journal article" date="2006" name="J. Bacteriol.">
        <title>Complete genome sequence of Yersinia pestis strains Antiqua and Nepal516: evidence of gene reduction in an emerging pathogen.</title>
        <authorList>
            <person name="Chain P.S.G."/>
            <person name="Hu P."/>
            <person name="Malfatti S.A."/>
            <person name="Radnedge L."/>
            <person name="Larimer F."/>
            <person name="Vergez L.M."/>
            <person name="Worsham P."/>
            <person name="Chu M.C."/>
            <person name="Andersen G.L."/>
        </authorList>
    </citation>
    <scope>NUCLEOTIDE SEQUENCE [LARGE SCALE GENOMIC DNA]</scope>
    <source>
        <strain>Nepal516</strain>
    </source>
</reference>
<reference key="2">
    <citation type="submission" date="2009-04" db="EMBL/GenBank/DDBJ databases">
        <title>Yersinia pestis Nepal516A whole genome shotgun sequencing project.</title>
        <authorList>
            <person name="Plunkett G. III"/>
            <person name="Anderson B.D."/>
            <person name="Baumler D.J."/>
            <person name="Burland V."/>
            <person name="Cabot E.L."/>
            <person name="Glasner J.D."/>
            <person name="Mau B."/>
            <person name="Neeno-Eckwall E."/>
            <person name="Perna N.T."/>
            <person name="Munk A.C."/>
            <person name="Tapia R."/>
            <person name="Green L.D."/>
            <person name="Rogers Y.C."/>
            <person name="Detter J.C."/>
            <person name="Bruce D.C."/>
            <person name="Brettin T.S."/>
        </authorList>
    </citation>
    <scope>NUCLEOTIDE SEQUENCE [LARGE SCALE GENOMIC DNA]</scope>
    <source>
        <strain>Nepal516</strain>
    </source>
</reference>
<evidence type="ECO:0000255" key="1">
    <source>
        <dbReference type="HAMAP-Rule" id="MF_00144"/>
    </source>
</evidence>
<name>MNMA_YERPN</name>
<keyword id="KW-0067">ATP-binding</keyword>
<keyword id="KW-0963">Cytoplasm</keyword>
<keyword id="KW-1015">Disulfide bond</keyword>
<keyword id="KW-0547">Nucleotide-binding</keyword>
<keyword id="KW-0694">RNA-binding</keyword>
<keyword id="KW-0808">Transferase</keyword>
<keyword id="KW-0819">tRNA processing</keyword>
<keyword id="KW-0820">tRNA-binding</keyword>
<protein>
    <recommendedName>
        <fullName evidence="1">tRNA-specific 2-thiouridylase MnmA</fullName>
        <ecNumber evidence="1">2.8.1.13</ecNumber>
    </recommendedName>
</protein>
<dbReference type="EC" id="2.8.1.13" evidence="1"/>
<dbReference type="EMBL" id="CP000305">
    <property type="protein sequence ID" value="ABG18322.1"/>
    <property type="molecule type" value="Genomic_DNA"/>
</dbReference>
<dbReference type="EMBL" id="ACNQ01000011">
    <property type="protein sequence ID" value="EEO76619.1"/>
    <property type="molecule type" value="Genomic_DNA"/>
</dbReference>
<dbReference type="RefSeq" id="WP_002210913.1">
    <property type="nucleotide sequence ID" value="NZ_ACNQ01000011.1"/>
</dbReference>
<dbReference type="SMR" id="Q1CI58"/>
<dbReference type="GeneID" id="57976935"/>
<dbReference type="KEGG" id="ypn:YPN_1993"/>
<dbReference type="HOGENOM" id="CLU_035188_1_0_6"/>
<dbReference type="Proteomes" id="UP000008936">
    <property type="component" value="Chromosome"/>
</dbReference>
<dbReference type="GO" id="GO:0005737">
    <property type="term" value="C:cytoplasm"/>
    <property type="evidence" value="ECO:0007669"/>
    <property type="project" value="UniProtKB-SubCell"/>
</dbReference>
<dbReference type="GO" id="GO:0005524">
    <property type="term" value="F:ATP binding"/>
    <property type="evidence" value="ECO:0007669"/>
    <property type="project" value="UniProtKB-KW"/>
</dbReference>
<dbReference type="GO" id="GO:0000049">
    <property type="term" value="F:tRNA binding"/>
    <property type="evidence" value="ECO:0007669"/>
    <property type="project" value="UniProtKB-KW"/>
</dbReference>
<dbReference type="GO" id="GO:0103016">
    <property type="term" value="F:tRNA-uridine 2-sulfurtransferase activity"/>
    <property type="evidence" value="ECO:0007669"/>
    <property type="project" value="UniProtKB-EC"/>
</dbReference>
<dbReference type="GO" id="GO:0002143">
    <property type="term" value="P:tRNA wobble position uridine thiolation"/>
    <property type="evidence" value="ECO:0007669"/>
    <property type="project" value="TreeGrafter"/>
</dbReference>
<dbReference type="CDD" id="cd01998">
    <property type="entry name" value="MnmA_TRMU-like"/>
    <property type="match status" value="1"/>
</dbReference>
<dbReference type="FunFam" id="2.30.30.280:FF:000001">
    <property type="entry name" value="tRNA-specific 2-thiouridylase MnmA"/>
    <property type="match status" value="1"/>
</dbReference>
<dbReference type="FunFam" id="2.40.30.10:FF:000023">
    <property type="entry name" value="tRNA-specific 2-thiouridylase MnmA"/>
    <property type="match status" value="1"/>
</dbReference>
<dbReference type="FunFam" id="3.40.50.620:FF:000004">
    <property type="entry name" value="tRNA-specific 2-thiouridylase MnmA"/>
    <property type="match status" value="1"/>
</dbReference>
<dbReference type="Gene3D" id="2.30.30.280">
    <property type="entry name" value="Adenine nucleotide alpha hydrolases-like domains"/>
    <property type="match status" value="1"/>
</dbReference>
<dbReference type="Gene3D" id="3.40.50.620">
    <property type="entry name" value="HUPs"/>
    <property type="match status" value="1"/>
</dbReference>
<dbReference type="Gene3D" id="2.40.30.10">
    <property type="entry name" value="Translation factors"/>
    <property type="match status" value="1"/>
</dbReference>
<dbReference type="HAMAP" id="MF_00144">
    <property type="entry name" value="tRNA_thiouridyl_MnmA"/>
    <property type="match status" value="1"/>
</dbReference>
<dbReference type="InterPro" id="IPR004506">
    <property type="entry name" value="MnmA-like"/>
</dbReference>
<dbReference type="InterPro" id="IPR046885">
    <property type="entry name" value="MnmA-like_C"/>
</dbReference>
<dbReference type="InterPro" id="IPR046884">
    <property type="entry name" value="MnmA-like_central"/>
</dbReference>
<dbReference type="InterPro" id="IPR023382">
    <property type="entry name" value="MnmA-like_central_sf"/>
</dbReference>
<dbReference type="InterPro" id="IPR014729">
    <property type="entry name" value="Rossmann-like_a/b/a_fold"/>
</dbReference>
<dbReference type="NCBIfam" id="NF001138">
    <property type="entry name" value="PRK00143.1"/>
    <property type="match status" value="1"/>
</dbReference>
<dbReference type="NCBIfam" id="TIGR00420">
    <property type="entry name" value="trmU"/>
    <property type="match status" value="1"/>
</dbReference>
<dbReference type="PANTHER" id="PTHR11933:SF5">
    <property type="entry name" value="MITOCHONDRIAL TRNA-SPECIFIC 2-THIOURIDYLASE 1"/>
    <property type="match status" value="1"/>
</dbReference>
<dbReference type="PANTHER" id="PTHR11933">
    <property type="entry name" value="TRNA 5-METHYLAMINOMETHYL-2-THIOURIDYLATE -METHYLTRANSFERASE"/>
    <property type="match status" value="1"/>
</dbReference>
<dbReference type="Pfam" id="PF03054">
    <property type="entry name" value="tRNA_Me_trans"/>
    <property type="match status" value="1"/>
</dbReference>
<dbReference type="Pfam" id="PF20258">
    <property type="entry name" value="tRNA_Me_trans_C"/>
    <property type="match status" value="1"/>
</dbReference>
<dbReference type="Pfam" id="PF20259">
    <property type="entry name" value="tRNA_Me_trans_M"/>
    <property type="match status" value="1"/>
</dbReference>
<dbReference type="SUPFAM" id="SSF52402">
    <property type="entry name" value="Adenine nucleotide alpha hydrolases-like"/>
    <property type="match status" value="1"/>
</dbReference>
<feature type="chain" id="PRO_0000349866" description="tRNA-specific 2-thiouridylase MnmA">
    <location>
        <begin position="1"/>
        <end position="371"/>
    </location>
</feature>
<feature type="region of interest" description="Interaction with target base in tRNA" evidence="1">
    <location>
        <begin position="98"/>
        <end position="100"/>
    </location>
</feature>
<feature type="region of interest" description="Interaction with tRNA" evidence="1">
    <location>
        <begin position="150"/>
        <end position="152"/>
    </location>
</feature>
<feature type="region of interest" description="Interaction with tRNA" evidence="1">
    <location>
        <begin position="312"/>
        <end position="313"/>
    </location>
</feature>
<feature type="active site" description="Nucleophile" evidence="1">
    <location>
        <position position="103"/>
    </location>
</feature>
<feature type="active site" description="Cysteine persulfide intermediate" evidence="1">
    <location>
        <position position="200"/>
    </location>
</feature>
<feature type="binding site" evidence="1">
    <location>
        <begin position="12"/>
        <end position="19"/>
    </location>
    <ligand>
        <name>ATP</name>
        <dbReference type="ChEBI" id="CHEBI:30616"/>
    </ligand>
</feature>
<feature type="binding site" evidence="1">
    <location>
        <position position="38"/>
    </location>
    <ligand>
        <name>ATP</name>
        <dbReference type="ChEBI" id="CHEBI:30616"/>
    </ligand>
</feature>
<feature type="binding site" evidence="1">
    <location>
        <position position="128"/>
    </location>
    <ligand>
        <name>ATP</name>
        <dbReference type="ChEBI" id="CHEBI:30616"/>
    </ligand>
</feature>
<feature type="site" description="Interaction with tRNA" evidence="1">
    <location>
        <position position="129"/>
    </location>
</feature>
<feature type="site" description="Interaction with tRNA" evidence="1">
    <location>
        <position position="345"/>
    </location>
</feature>
<feature type="disulfide bond" description="Alternate" evidence="1">
    <location>
        <begin position="103"/>
        <end position="200"/>
    </location>
</feature>